<accession>B0JWQ4</accession>
<sequence>MTSLLVHTYPSLVKGILIKRYKRFFADIQLDNGELITAHCANTGPMTDVCVEGQPVYLSRSDNPKRKLAYTWEMIQLGETWVGVNTNLPNQVVKNALLQGVFPDLVKNETEVRSEVAYGQNNGSRIDFLLTHGDNSLTYIEVKNTTWNQGETALFPDTVTTRGQKHLQELMALLPAAEAIMLYFINRGDCYRFAPGDSKDTKYGQLLRQAVAKGVKVLPCRFQVTPTGIYYLGLAELQL</sequence>
<gene>
    <name evidence="1" type="primary">sfsA</name>
    <name type="ordered locus">MAE_19120</name>
</gene>
<proteinExistence type="inferred from homology"/>
<dbReference type="EMBL" id="AP009552">
    <property type="protein sequence ID" value="BAG01734.1"/>
    <property type="molecule type" value="Genomic_DNA"/>
</dbReference>
<dbReference type="RefSeq" id="WP_012265186.1">
    <property type="nucleotide sequence ID" value="NC_010296.1"/>
</dbReference>
<dbReference type="SMR" id="B0JWQ4"/>
<dbReference type="STRING" id="449447.MAE_19120"/>
<dbReference type="PaxDb" id="449447-MAE_19120"/>
<dbReference type="EnsemblBacteria" id="BAG01734">
    <property type="protein sequence ID" value="BAG01734"/>
    <property type="gene ID" value="MAE_19120"/>
</dbReference>
<dbReference type="KEGG" id="mar:MAE_19120"/>
<dbReference type="PATRIC" id="fig|449447.4.peg.1755"/>
<dbReference type="eggNOG" id="COG1489">
    <property type="taxonomic scope" value="Bacteria"/>
</dbReference>
<dbReference type="HOGENOM" id="CLU_052299_2_0_3"/>
<dbReference type="BioCyc" id="MAER449447:MAE_RS08365-MONOMER"/>
<dbReference type="Proteomes" id="UP000001510">
    <property type="component" value="Chromosome"/>
</dbReference>
<dbReference type="GO" id="GO:0003677">
    <property type="term" value="F:DNA binding"/>
    <property type="evidence" value="ECO:0007669"/>
    <property type="project" value="InterPro"/>
</dbReference>
<dbReference type="CDD" id="cd22359">
    <property type="entry name" value="SfsA-like_bacterial"/>
    <property type="match status" value="1"/>
</dbReference>
<dbReference type="Gene3D" id="2.40.50.580">
    <property type="match status" value="1"/>
</dbReference>
<dbReference type="Gene3D" id="3.40.1350.60">
    <property type="match status" value="1"/>
</dbReference>
<dbReference type="HAMAP" id="MF_00095">
    <property type="entry name" value="SfsA"/>
    <property type="match status" value="1"/>
</dbReference>
<dbReference type="InterPro" id="IPR005224">
    <property type="entry name" value="SfsA"/>
</dbReference>
<dbReference type="InterPro" id="IPR040452">
    <property type="entry name" value="SfsA_C"/>
</dbReference>
<dbReference type="InterPro" id="IPR041465">
    <property type="entry name" value="SfsA_N"/>
</dbReference>
<dbReference type="NCBIfam" id="TIGR00230">
    <property type="entry name" value="sfsA"/>
    <property type="match status" value="1"/>
</dbReference>
<dbReference type="PANTHER" id="PTHR30545">
    <property type="entry name" value="SUGAR FERMENTATION STIMULATION PROTEIN A"/>
    <property type="match status" value="1"/>
</dbReference>
<dbReference type="PANTHER" id="PTHR30545:SF2">
    <property type="entry name" value="SUGAR FERMENTATION STIMULATION PROTEIN A"/>
    <property type="match status" value="1"/>
</dbReference>
<dbReference type="Pfam" id="PF03749">
    <property type="entry name" value="SfsA"/>
    <property type="match status" value="1"/>
</dbReference>
<dbReference type="Pfam" id="PF17746">
    <property type="entry name" value="SfsA_N"/>
    <property type="match status" value="1"/>
</dbReference>
<evidence type="ECO:0000255" key="1">
    <source>
        <dbReference type="HAMAP-Rule" id="MF_00095"/>
    </source>
</evidence>
<reference key="1">
    <citation type="journal article" date="2007" name="DNA Res.">
        <title>Complete genomic structure of the bloom-forming toxic cyanobacterium Microcystis aeruginosa NIES-843.</title>
        <authorList>
            <person name="Kaneko T."/>
            <person name="Nakajima N."/>
            <person name="Okamoto S."/>
            <person name="Suzuki I."/>
            <person name="Tanabe Y."/>
            <person name="Tamaoki M."/>
            <person name="Nakamura Y."/>
            <person name="Kasai F."/>
            <person name="Watanabe A."/>
            <person name="Kawashima K."/>
            <person name="Kishida Y."/>
            <person name="Ono A."/>
            <person name="Shimizu Y."/>
            <person name="Takahashi C."/>
            <person name="Minami C."/>
            <person name="Fujishiro T."/>
            <person name="Kohara M."/>
            <person name="Katoh M."/>
            <person name="Nakazaki N."/>
            <person name="Nakayama S."/>
            <person name="Yamada M."/>
            <person name="Tabata S."/>
            <person name="Watanabe M.M."/>
        </authorList>
    </citation>
    <scope>NUCLEOTIDE SEQUENCE [LARGE SCALE GENOMIC DNA]</scope>
    <source>
        <strain>NIES-843 / IAM M-247</strain>
    </source>
</reference>
<feature type="chain" id="PRO_0000340145" description="Sugar fermentation stimulation protein homolog">
    <location>
        <begin position="1"/>
        <end position="239"/>
    </location>
</feature>
<organism>
    <name type="scientific">Microcystis aeruginosa (strain NIES-843 / IAM M-2473)</name>
    <dbReference type="NCBI Taxonomy" id="449447"/>
    <lineage>
        <taxon>Bacteria</taxon>
        <taxon>Bacillati</taxon>
        <taxon>Cyanobacteriota</taxon>
        <taxon>Cyanophyceae</taxon>
        <taxon>Oscillatoriophycideae</taxon>
        <taxon>Chroococcales</taxon>
        <taxon>Microcystaceae</taxon>
        <taxon>Microcystis</taxon>
    </lineage>
</organism>
<comment type="similarity">
    <text evidence="1">Belongs to the SfsA family.</text>
</comment>
<protein>
    <recommendedName>
        <fullName evidence="1">Sugar fermentation stimulation protein homolog</fullName>
    </recommendedName>
</protein>
<name>SFSA_MICAN</name>